<gene>
    <name evidence="1" type="primary">rplQ</name>
    <name type="ordered locus">SPN23F02250</name>
</gene>
<sequence length="128" mass="14506">MAYRKLGRTSSQRKAMLRDLTTDLLINESIVTTEARAKEIRKTVEKMITLGKRGDLHARRQAAAFVRNEIASENYDEATDKYTSTTALQKLFSEIAPRYAERNGGYTRILKTEPRRGDAAPMAIIELV</sequence>
<organism>
    <name type="scientific">Streptococcus pneumoniae (strain ATCC 700669 / Spain 23F-1)</name>
    <dbReference type="NCBI Taxonomy" id="561276"/>
    <lineage>
        <taxon>Bacteria</taxon>
        <taxon>Bacillati</taxon>
        <taxon>Bacillota</taxon>
        <taxon>Bacilli</taxon>
        <taxon>Lactobacillales</taxon>
        <taxon>Streptococcaceae</taxon>
        <taxon>Streptococcus</taxon>
    </lineage>
</organism>
<comment type="subunit">
    <text evidence="1">Part of the 50S ribosomal subunit. Contacts protein L32.</text>
</comment>
<comment type="similarity">
    <text evidence="1">Belongs to the bacterial ribosomal protein bL17 family.</text>
</comment>
<protein>
    <recommendedName>
        <fullName evidence="1">Large ribosomal subunit protein bL17</fullName>
    </recommendedName>
    <alternativeName>
        <fullName evidence="2">50S ribosomal protein L17</fullName>
    </alternativeName>
</protein>
<keyword id="KW-0687">Ribonucleoprotein</keyword>
<keyword id="KW-0689">Ribosomal protein</keyword>
<name>RL17_STRPJ</name>
<evidence type="ECO:0000255" key="1">
    <source>
        <dbReference type="HAMAP-Rule" id="MF_01368"/>
    </source>
</evidence>
<evidence type="ECO:0000305" key="2"/>
<accession>B8ZKQ6</accession>
<proteinExistence type="inferred from homology"/>
<dbReference type="EMBL" id="FM211187">
    <property type="protein sequence ID" value="CAR68085.1"/>
    <property type="molecule type" value="Genomic_DNA"/>
</dbReference>
<dbReference type="RefSeq" id="WP_000331493.1">
    <property type="nucleotide sequence ID" value="NC_011900.1"/>
</dbReference>
<dbReference type="SMR" id="B8ZKQ6"/>
<dbReference type="GeneID" id="93738984"/>
<dbReference type="KEGG" id="sne:SPN23F02250"/>
<dbReference type="HOGENOM" id="CLU_074407_2_2_9"/>
<dbReference type="GO" id="GO:0022625">
    <property type="term" value="C:cytosolic large ribosomal subunit"/>
    <property type="evidence" value="ECO:0007669"/>
    <property type="project" value="TreeGrafter"/>
</dbReference>
<dbReference type="GO" id="GO:0003735">
    <property type="term" value="F:structural constituent of ribosome"/>
    <property type="evidence" value="ECO:0007669"/>
    <property type="project" value="InterPro"/>
</dbReference>
<dbReference type="GO" id="GO:0006412">
    <property type="term" value="P:translation"/>
    <property type="evidence" value="ECO:0007669"/>
    <property type="project" value="UniProtKB-UniRule"/>
</dbReference>
<dbReference type="FunFam" id="3.90.1030.10:FF:000002">
    <property type="entry name" value="50S ribosomal protein L17"/>
    <property type="match status" value="1"/>
</dbReference>
<dbReference type="Gene3D" id="3.90.1030.10">
    <property type="entry name" value="Ribosomal protein L17"/>
    <property type="match status" value="1"/>
</dbReference>
<dbReference type="HAMAP" id="MF_01368">
    <property type="entry name" value="Ribosomal_bL17"/>
    <property type="match status" value="1"/>
</dbReference>
<dbReference type="InterPro" id="IPR000456">
    <property type="entry name" value="Ribosomal_bL17"/>
</dbReference>
<dbReference type="InterPro" id="IPR047859">
    <property type="entry name" value="Ribosomal_bL17_CS"/>
</dbReference>
<dbReference type="InterPro" id="IPR036373">
    <property type="entry name" value="Ribosomal_bL17_sf"/>
</dbReference>
<dbReference type="NCBIfam" id="TIGR00059">
    <property type="entry name" value="L17"/>
    <property type="match status" value="1"/>
</dbReference>
<dbReference type="PANTHER" id="PTHR14413:SF16">
    <property type="entry name" value="LARGE RIBOSOMAL SUBUNIT PROTEIN BL17M"/>
    <property type="match status" value="1"/>
</dbReference>
<dbReference type="PANTHER" id="PTHR14413">
    <property type="entry name" value="RIBOSOMAL PROTEIN L17"/>
    <property type="match status" value="1"/>
</dbReference>
<dbReference type="Pfam" id="PF01196">
    <property type="entry name" value="Ribosomal_L17"/>
    <property type="match status" value="1"/>
</dbReference>
<dbReference type="SUPFAM" id="SSF64263">
    <property type="entry name" value="Prokaryotic ribosomal protein L17"/>
    <property type="match status" value="1"/>
</dbReference>
<dbReference type="PROSITE" id="PS01167">
    <property type="entry name" value="RIBOSOMAL_L17"/>
    <property type="match status" value="1"/>
</dbReference>
<reference key="1">
    <citation type="journal article" date="2009" name="J. Bacteriol.">
        <title>Role of conjugative elements in the evolution of the multidrug-resistant pandemic clone Streptococcus pneumoniae Spain23F ST81.</title>
        <authorList>
            <person name="Croucher N.J."/>
            <person name="Walker D."/>
            <person name="Romero P."/>
            <person name="Lennard N."/>
            <person name="Paterson G.K."/>
            <person name="Bason N.C."/>
            <person name="Mitchell A.M."/>
            <person name="Quail M.A."/>
            <person name="Andrew P.W."/>
            <person name="Parkhill J."/>
            <person name="Bentley S.D."/>
            <person name="Mitchell T.J."/>
        </authorList>
    </citation>
    <scope>NUCLEOTIDE SEQUENCE [LARGE SCALE GENOMIC DNA]</scope>
    <source>
        <strain>ATCC 700669 / Spain 23F-1</strain>
    </source>
</reference>
<feature type="chain" id="PRO_1000184046" description="Large ribosomal subunit protein bL17">
    <location>
        <begin position="1"/>
        <end position="128"/>
    </location>
</feature>